<organism>
    <name type="scientific">Saccharomyces cerevisiae (strain ATCC 204508 / S288c)</name>
    <name type="common">Baker's yeast</name>
    <dbReference type="NCBI Taxonomy" id="559292"/>
    <lineage>
        <taxon>Eukaryota</taxon>
        <taxon>Fungi</taxon>
        <taxon>Dikarya</taxon>
        <taxon>Ascomycota</taxon>
        <taxon>Saccharomycotina</taxon>
        <taxon>Saccharomycetes</taxon>
        <taxon>Saccharomycetales</taxon>
        <taxon>Saccharomycetaceae</taxon>
        <taxon>Saccharomyces</taxon>
    </lineage>
</organism>
<accession>Q02981</accession>
<accession>D6W3Q8</accession>
<protein>
    <recommendedName>
        <fullName>ABC1 family protein YPL109C, mitochondrial</fullName>
    </recommendedName>
</protein>
<evidence type="ECO:0000255" key="1"/>
<evidence type="ECO:0000269" key="2">
    <source>
    </source>
</evidence>
<evidence type="ECO:0000269" key="3">
    <source>
    </source>
</evidence>
<evidence type="ECO:0000269" key="4">
    <source>
    </source>
</evidence>
<evidence type="ECO:0000305" key="5"/>
<keyword id="KW-0496">Mitochondrion</keyword>
<keyword id="KW-1185">Reference proteome</keyword>
<keyword id="KW-0809">Transit peptide</keyword>
<feature type="transit peptide" description="Mitochondrion" evidence="1">
    <location>
        <begin position="1"/>
        <end position="15"/>
    </location>
</feature>
<feature type="chain" id="PRO_0000200738" description="ABC1 family protein YPL109C, mitochondrial">
    <location>
        <begin position="16"/>
        <end position="657"/>
    </location>
</feature>
<proteinExistence type="evidence at protein level"/>
<name>YP109_YEAST</name>
<reference key="1">
    <citation type="journal article" date="1997" name="Nature">
        <title>The nucleotide sequence of Saccharomyces cerevisiae chromosome XVI.</title>
        <authorList>
            <person name="Bussey H."/>
            <person name="Storms R.K."/>
            <person name="Ahmed A."/>
            <person name="Albermann K."/>
            <person name="Allen E."/>
            <person name="Ansorge W."/>
            <person name="Araujo R."/>
            <person name="Aparicio A."/>
            <person name="Barrell B.G."/>
            <person name="Badcock K."/>
            <person name="Benes V."/>
            <person name="Botstein D."/>
            <person name="Bowman S."/>
            <person name="Brueckner M."/>
            <person name="Carpenter J."/>
            <person name="Cherry J.M."/>
            <person name="Chung E."/>
            <person name="Churcher C.M."/>
            <person name="Coster F."/>
            <person name="Davis K."/>
            <person name="Davis R.W."/>
            <person name="Dietrich F.S."/>
            <person name="Delius H."/>
            <person name="DiPaolo T."/>
            <person name="Dubois E."/>
            <person name="Duesterhoeft A."/>
            <person name="Duncan M."/>
            <person name="Floeth M."/>
            <person name="Fortin N."/>
            <person name="Friesen J.D."/>
            <person name="Fritz C."/>
            <person name="Goffeau A."/>
            <person name="Hall J."/>
            <person name="Hebling U."/>
            <person name="Heumann K."/>
            <person name="Hilbert H."/>
            <person name="Hillier L.W."/>
            <person name="Hunicke-Smith S."/>
            <person name="Hyman R.W."/>
            <person name="Johnston M."/>
            <person name="Kalman S."/>
            <person name="Kleine K."/>
            <person name="Komp C."/>
            <person name="Kurdi O."/>
            <person name="Lashkari D."/>
            <person name="Lew H."/>
            <person name="Lin A."/>
            <person name="Lin D."/>
            <person name="Louis E.J."/>
            <person name="Marathe R."/>
            <person name="Messenguy F."/>
            <person name="Mewes H.-W."/>
            <person name="Mirtipati S."/>
            <person name="Moestl D."/>
            <person name="Mueller-Auer S."/>
            <person name="Namath A."/>
            <person name="Nentwich U."/>
            <person name="Oefner P."/>
            <person name="Pearson D."/>
            <person name="Petel F.X."/>
            <person name="Pohl T.M."/>
            <person name="Purnelle B."/>
            <person name="Rajandream M.A."/>
            <person name="Rechmann S."/>
            <person name="Rieger M."/>
            <person name="Riles L."/>
            <person name="Roberts D."/>
            <person name="Schaefer M."/>
            <person name="Scharfe M."/>
            <person name="Scherens B."/>
            <person name="Schramm S."/>
            <person name="Schroeder M."/>
            <person name="Sdicu A.-M."/>
            <person name="Tettelin H."/>
            <person name="Urrestarazu L.A."/>
            <person name="Ushinsky S."/>
            <person name="Vierendeels F."/>
            <person name="Vissers S."/>
            <person name="Voss H."/>
            <person name="Walsh S.V."/>
            <person name="Wambutt R."/>
            <person name="Wang Y."/>
            <person name="Wedler E."/>
            <person name="Wedler H."/>
            <person name="Winnett E."/>
            <person name="Zhong W.-W."/>
            <person name="Zollner A."/>
            <person name="Vo D.H."/>
            <person name="Hani J."/>
        </authorList>
    </citation>
    <scope>NUCLEOTIDE SEQUENCE [LARGE SCALE GENOMIC DNA]</scope>
    <source>
        <strain>ATCC 204508 / S288c</strain>
    </source>
</reference>
<reference key="2">
    <citation type="submission" date="2005-12" db="EMBL/GenBank/DDBJ databases">
        <authorList>
            <person name="Hong E.L."/>
            <person name="Cherry J.M."/>
        </authorList>
    </citation>
    <scope>SEQUENCE REVISION</scope>
</reference>
<reference key="3">
    <citation type="journal article" date="2014" name="G3 (Bethesda)">
        <title>The reference genome sequence of Saccharomyces cerevisiae: Then and now.</title>
        <authorList>
            <person name="Engel S.R."/>
            <person name="Dietrich F.S."/>
            <person name="Fisk D.G."/>
            <person name="Binkley G."/>
            <person name="Balakrishnan R."/>
            <person name="Costanzo M.C."/>
            <person name="Dwight S.S."/>
            <person name="Hitz B.C."/>
            <person name="Karra K."/>
            <person name="Nash R.S."/>
            <person name="Weng S."/>
            <person name="Wong E.D."/>
            <person name="Lloyd P."/>
            <person name="Skrzypek M.S."/>
            <person name="Miyasato S.R."/>
            <person name="Simison M."/>
            <person name="Cherry J.M."/>
        </authorList>
    </citation>
    <scope>GENOME REANNOTATION</scope>
    <source>
        <strain>ATCC 204508 / S288c</strain>
    </source>
</reference>
<reference key="4">
    <citation type="journal article" date="2003" name="Genome Biol.">
        <title>Reinvestigation of the Saccharomyces cerevisiae genome annotation by comparison to the genome of a related fungus: Ashbya gossypii.</title>
        <authorList>
            <person name="Brachat S."/>
            <person name="Dietrich F.S."/>
            <person name="Voegeli S."/>
            <person name="Zhang Z."/>
            <person name="Stuart L."/>
            <person name="Lerch A."/>
            <person name="Gates K."/>
            <person name="Gaffney T.D."/>
            <person name="Philippsen P."/>
        </authorList>
    </citation>
    <scope>REVISION OF GENE MODEL</scope>
</reference>
<reference key="5">
    <citation type="journal article" date="2003" name="Nature">
        <title>Sequencing and comparison of yeast species to identify genes and regulatory elements.</title>
        <authorList>
            <person name="Kellis M."/>
            <person name="Patterson N."/>
            <person name="Endrizzi M."/>
            <person name="Birren B.W."/>
            <person name="Lander E.S."/>
        </authorList>
    </citation>
    <scope>IDENTIFICATION OF FRAMESHIFTS</scope>
</reference>
<reference key="6">
    <citation type="journal article" date="2003" name="Nature">
        <title>Global analysis of protein localization in budding yeast.</title>
        <authorList>
            <person name="Huh W.-K."/>
            <person name="Falvo J.V."/>
            <person name="Gerke L.C."/>
            <person name="Carroll A.S."/>
            <person name="Howson R.W."/>
            <person name="Weissman J.S."/>
            <person name="O'Shea E.K."/>
        </authorList>
    </citation>
    <scope>SUBCELLULAR LOCATION [LARGE SCALE ANALYSIS]</scope>
</reference>
<reference key="7">
    <citation type="journal article" date="2003" name="Nature">
        <title>Global analysis of protein expression in yeast.</title>
        <authorList>
            <person name="Ghaemmaghami S."/>
            <person name="Huh W.-K."/>
            <person name="Bower K."/>
            <person name="Howson R.W."/>
            <person name="Belle A."/>
            <person name="Dephoure N."/>
            <person name="O'Shea E.K."/>
            <person name="Weissman J.S."/>
        </authorList>
    </citation>
    <scope>LEVEL OF PROTEIN EXPRESSION [LARGE SCALE ANALYSIS]</scope>
</reference>
<reference key="8">
    <citation type="journal article" date="2003" name="Proc. Natl. Acad. Sci. U.S.A.">
        <title>The proteome of Saccharomyces cerevisiae mitochondria.</title>
        <authorList>
            <person name="Sickmann A."/>
            <person name="Reinders J."/>
            <person name="Wagner Y."/>
            <person name="Joppich C."/>
            <person name="Zahedi R.P."/>
            <person name="Meyer H.E."/>
            <person name="Schoenfisch B."/>
            <person name="Perschil I."/>
            <person name="Chacinska A."/>
            <person name="Guiard B."/>
            <person name="Rehling P."/>
            <person name="Pfanner N."/>
            <person name="Meisinger C."/>
        </authorList>
    </citation>
    <scope>SUBCELLULAR LOCATION [LARGE SCALE ANALYSIS]</scope>
    <source>
        <strain>ATCC 76625 / YPH499</strain>
    </source>
</reference>
<reference key="9">
    <citation type="journal article" date="2003" name="Science">
        <title>Finding functional features in Saccharomyces genomes by phylogenetic footprinting.</title>
        <authorList>
            <person name="Cliften P.F."/>
            <person name="Sudarsanam P."/>
            <person name="Desikan A."/>
            <person name="Fulton L."/>
            <person name="Fulton B."/>
            <person name="Majors J."/>
            <person name="Waterston R."/>
            <person name="Cohen B.A."/>
            <person name="Johnston M."/>
        </authorList>
    </citation>
    <scope>IDENTIFICATION OF FRAMESHIFTS</scope>
</reference>
<dbReference type="EMBL" id="U43503">
    <property type="protein sequence ID" value="AAB68252.2"/>
    <property type="molecule type" value="Genomic_DNA"/>
</dbReference>
<dbReference type="EMBL" id="BK006949">
    <property type="protein sequence ID" value="DAA11324.1"/>
    <property type="molecule type" value="Genomic_DNA"/>
</dbReference>
<dbReference type="PIR" id="S62012">
    <property type="entry name" value="S62012"/>
</dbReference>
<dbReference type="BioGRID" id="36072">
    <property type="interactions" value="200"/>
</dbReference>
<dbReference type="FunCoup" id="Q02981">
    <property type="interactions" value="105"/>
</dbReference>
<dbReference type="IntAct" id="Q02981">
    <property type="interactions" value="14"/>
</dbReference>
<dbReference type="MINT" id="Q02981"/>
<dbReference type="STRING" id="4932.YPL109C"/>
<dbReference type="PaxDb" id="4932-YPL109C"/>
<dbReference type="PeptideAtlas" id="Q02981"/>
<dbReference type="DNASU" id="855995"/>
<dbReference type="EnsemblFungi" id="YPL109C_mRNA">
    <property type="protein sequence ID" value="YPL109C"/>
    <property type="gene ID" value="YPL109C"/>
</dbReference>
<dbReference type="KEGG" id="sce:YPL109C"/>
<dbReference type="AGR" id="SGD:S000006030"/>
<dbReference type="SGD" id="S000006030">
    <property type="gene designation" value="YPL109C"/>
</dbReference>
<dbReference type="VEuPathDB" id="FungiDB:YPL109C"/>
<dbReference type="eggNOG" id="KOG1236">
    <property type="taxonomic scope" value="Eukaryota"/>
</dbReference>
<dbReference type="GeneTree" id="ENSGT00390000001536"/>
<dbReference type="HOGENOM" id="CLU_006533_6_0_1"/>
<dbReference type="InParanoid" id="Q02981"/>
<dbReference type="OMA" id="SMVRTHH"/>
<dbReference type="OrthoDB" id="1290869at2759"/>
<dbReference type="BioCyc" id="YEAST:G3O-34011-MONOMER"/>
<dbReference type="BioGRID-ORCS" id="855995">
    <property type="hits" value="3 hits in 13 CRISPR screens"/>
</dbReference>
<dbReference type="PRO" id="PR:Q02981"/>
<dbReference type="Proteomes" id="UP000002311">
    <property type="component" value="Chromosome XVI"/>
</dbReference>
<dbReference type="RNAct" id="Q02981">
    <property type="molecule type" value="protein"/>
</dbReference>
<dbReference type="GO" id="GO:0005743">
    <property type="term" value="C:mitochondrial inner membrane"/>
    <property type="evidence" value="ECO:0000314"/>
    <property type="project" value="SGD"/>
</dbReference>
<dbReference type="GO" id="GO:0044289">
    <property type="term" value="C:mitochondrial inner-outer membrane contact site"/>
    <property type="evidence" value="ECO:0000314"/>
    <property type="project" value="SGD"/>
</dbReference>
<dbReference type="GO" id="GO:0005739">
    <property type="term" value="C:mitochondrion"/>
    <property type="evidence" value="ECO:0007005"/>
    <property type="project" value="SGD"/>
</dbReference>
<dbReference type="GO" id="GO:0007005">
    <property type="term" value="P:mitochondrion organization"/>
    <property type="evidence" value="ECO:0000315"/>
    <property type="project" value="SGD"/>
</dbReference>
<dbReference type="GO" id="GO:0055091">
    <property type="term" value="P:phospholipid homeostasis"/>
    <property type="evidence" value="ECO:0000315"/>
    <property type="project" value="SGD"/>
</dbReference>
<dbReference type="CDD" id="cd13971">
    <property type="entry name" value="ADCK2-like"/>
    <property type="match status" value="1"/>
</dbReference>
<dbReference type="InterPro" id="IPR004147">
    <property type="entry name" value="ABC1_dom"/>
</dbReference>
<dbReference type="InterPro" id="IPR044095">
    <property type="entry name" value="ADCK2_dom"/>
</dbReference>
<dbReference type="InterPro" id="IPR052402">
    <property type="entry name" value="ADCK_kinase"/>
</dbReference>
<dbReference type="InterPro" id="IPR011009">
    <property type="entry name" value="Kinase-like_dom_sf"/>
</dbReference>
<dbReference type="PANTHER" id="PTHR45890:SF1">
    <property type="entry name" value="AARF DOMAIN CONTAINING KINASE 2"/>
    <property type="match status" value="1"/>
</dbReference>
<dbReference type="PANTHER" id="PTHR45890">
    <property type="entry name" value="AARF DOMAIN CONTAINING KINASE 2 (PREDICTED)"/>
    <property type="match status" value="1"/>
</dbReference>
<dbReference type="Pfam" id="PF03109">
    <property type="entry name" value="ABC1"/>
    <property type="match status" value="1"/>
</dbReference>
<dbReference type="SUPFAM" id="SSF56112">
    <property type="entry name" value="Protein kinase-like (PK-like)"/>
    <property type="match status" value="1"/>
</dbReference>
<comment type="subcellular location">
    <subcellularLocation>
        <location evidence="2 4">Mitochondrion</location>
    </subcellularLocation>
</comment>
<comment type="miscellaneous">
    <text evidence="3">Present with 2470 molecules/cell in log phase SD medium.</text>
</comment>
<comment type="similarity">
    <text evidence="5">Belongs to the protein kinase superfamily. ADCK protein kinase family.</text>
</comment>
<gene>
    <name type="ordered locus">YPL109C</name>
    <name type="ORF">LPH17C</name>
</gene>
<sequence>MSFLKFAYRNSWRYYSKSTRHFHKIPIRQFIIPTSIAFYLTQNSFPKQNCLIYNDSLKPDPKGDTFEMGLYVSSENELQEKLKSFRSAKITESRNKLIRYLRIFWFGFNDNIVEPVCTILRFLEISAIFLPLLLLYPISWFGHKLKITDTNITETRGSLIWCQLLRKALELAGPSFIKLGQWAGSRTDIFSHALCHELGKLHSNVTAHSLSFTLEKLSQALKVDKIEDAFDEFNRTPIGVGSIAQVYVGELSQKYIDKYDNIQIGKDGNRWCAIKILHPNVRSQIRRDLKIMKFCADAINWIPTMEWLSLPSEVDQFSILMNIQLDLRIEALNLERFNENFKNSIQVKFPKPFLPLSNRDVMFEEHVYGLSMEKFLSTKKQINDVELCKKVSDPFVDAFLQMLILDDFVHADLHPGNVIIRFVKTNKYGTNIISSELESYRITHDLRKKIEEDQDQDFVGKLKSVLTNYTPQICFIDTGIITELNEKNRINFIALFNALARFDGYRAGELMIERSRTPETAIDKEVFAFKVEKLVDKVKQRTFTLGTVSIGDLLDQMLSMVRSHHVRMESDFVSVVVAILLLEGIGRQLDPNLDLFESSLPILREFGFKREAKSLLKDASTLSMLKIWVGLEVRQLMHLSMKQIYDLVRTDQLCPNY</sequence>